<protein>
    <recommendedName>
        <fullName evidence="1">Peptidyl-tRNA hydrolase</fullName>
        <shortName evidence="1">Pth</shortName>
        <ecNumber evidence="1">3.1.1.29</ecNumber>
    </recommendedName>
</protein>
<dbReference type="EC" id="3.1.1.29" evidence="1"/>
<dbReference type="EMBL" id="CP000360">
    <property type="protein sequence ID" value="ABF43538.1"/>
    <property type="status" value="ALT_INIT"/>
    <property type="molecule type" value="Genomic_DNA"/>
</dbReference>
<dbReference type="RefSeq" id="WP_041857166.1">
    <property type="nucleotide sequence ID" value="NC_008009.1"/>
</dbReference>
<dbReference type="SMR" id="Q1IHW2"/>
<dbReference type="STRING" id="204669.Acid345_4538"/>
<dbReference type="EnsemblBacteria" id="ABF43538">
    <property type="protein sequence ID" value="ABF43538"/>
    <property type="gene ID" value="Acid345_4538"/>
</dbReference>
<dbReference type="KEGG" id="aba:Acid345_4538"/>
<dbReference type="eggNOG" id="COG0193">
    <property type="taxonomic scope" value="Bacteria"/>
</dbReference>
<dbReference type="HOGENOM" id="CLU_062456_4_1_0"/>
<dbReference type="OrthoDB" id="9800507at2"/>
<dbReference type="Proteomes" id="UP000002432">
    <property type="component" value="Chromosome"/>
</dbReference>
<dbReference type="GO" id="GO:0005737">
    <property type="term" value="C:cytoplasm"/>
    <property type="evidence" value="ECO:0007669"/>
    <property type="project" value="UniProtKB-SubCell"/>
</dbReference>
<dbReference type="GO" id="GO:0004045">
    <property type="term" value="F:peptidyl-tRNA hydrolase activity"/>
    <property type="evidence" value="ECO:0007669"/>
    <property type="project" value="UniProtKB-UniRule"/>
</dbReference>
<dbReference type="GO" id="GO:0000049">
    <property type="term" value="F:tRNA binding"/>
    <property type="evidence" value="ECO:0007669"/>
    <property type="project" value="UniProtKB-UniRule"/>
</dbReference>
<dbReference type="GO" id="GO:0006515">
    <property type="term" value="P:protein quality control for misfolded or incompletely synthesized proteins"/>
    <property type="evidence" value="ECO:0007669"/>
    <property type="project" value="UniProtKB-UniRule"/>
</dbReference>
<dbReference type="GO" id="GO:0072344">
    <property type="term" value="P:rescue of stalled ribosome"/>
    <property type="evidence" value="ECO:0007669"/>
    <property type="project" value="UniProtKB-UniRule"/>
</dbReference>
<dbReference type="CDD" id="cd00462">
    <property type="entry name" value="PTH"/>
    <property type="match status" value="1"/>
</dbReference>
<dbReference type="FunFam" id="3.40.50.1470:FF:000001">
    <property type="entry name" value="Peptidyl-tRNA hydrolase"/>
    <property type="match status" value="1"/>
</dbReference>
<dbReference type="Gene3D" id="3.40.50.1470">
    <property type="entry name" value="Peptidyl-tRNA hydrolase"/>
    <property type="match status" value="1"/>
</dbReference>
<dbReference type="HAMAP" id="MF_00083">
    <property type="entry name" value="Pept_tRNA_hydro_bact"/>
    <property type="match status" value="1"/>
</dbReference>
<dbReference type="InterPro" id="IPR001328">
    <property type="entry name" value="Pept_tRNA_hydro"/>
</dbReference>
<dbReference type="InterPro" id="IPR036416">
    <property type="entry name" value="Pept_tRNA_hydro_sf"/>
</dbReference>
<dbReference type="NCBIfam" id="TIGR00447">
    <property type="entry name" value="pth"/>
    <property type="match status" value="1"/>
</dbReference>
<dbReference type="PANTHER" id="PTHR17224">
    <property type="entry name" value="PEPTIDYL-TRNA HYDROLASE"/>
    <property type="match status" value="1"/>
</dbReference>
<dbReference type="PANTHER" id="PTHR17224:SF1">
    <property type="entry name" value="PEPTIDYL-TRNA HYDROLASE"/>
    <property type="match status" value="1"/>
</dbReference>
<dbReference type="Pfam" id="PF01195">
    <property type="entry name" value="Pept_tRNA_hydro"/>
    <property type="match status" value="1"/>
</dbReference>
<dbReference type="SUPFAM" id="SSF53178">
    <property type="entry name" value="Peptidyl-tRNA hydrolase-like"/>
    <property type="match status" value="1"/>
</dbReference>
<feature type="chain" id="PRO_0000263999" description="Peptidyl-tRNA hydrolase">
    <location>
        <begin position="1"/>
        <end position="201"/>
    </location>
</feature>
<feature type="region of interest" description="Disordered" evidence="2">
    <location>
        <begin position="178"/>
        <end position="201"/>
    </location>
</feature>
<feature type="active site" description="Proton acceptor" evidence="1">
    <location>
        <position position="19"/>
    </location>
</feature>
<feature type="binding site" evidence="1">
    <location>
        <position position="14"/>
    </location>
    <ligand>
        <name>tRNA</name>
        <dbReference type="ChEBI" id="CHEBI:17843"/>
    </ligand>
</feature>
<feature type="binding site" evidence="1">
    <location>
        <position position="64"/>
    </location>
    <ligand>
        <name>tRNA</name>
        <dbReference type="ChEBI" id="CHEBI:17843"/>
    </ligand>
</feature>
<feature type="binding site" evidence="1">
    <location>
        <position position="66"/>
    </location>
    <ligand>
        <name>tRNA</name>
        <dbReference type="ChEBI" id="CHEBI:17843"/>
    </ligand>
</feature>
<feature type="binding site" evidence="1">
    <location>
        <position position="113"/>
    </location>
    <ligand>
        <name>tRNA</name>
        <dbReference type="ChEBI" id="CHEBI:17843"/>
    </ligand>
</feature>
<feature type="site" description="Discriminates between blocked and unblocked aminoacyl-tRNA" evidence="1">
    <location>
        <position position="9"/>
    </location>
</feature>
<feature type="site" description="Stabilizes the basic form of H active site to accept a proton" evidence="1">
    <location>
        <position position="92"/>
    </location>
</feature>
<name>PTH_KORVE</name>
<keyword id="KW-0963">Cytoplasm</keyword>
<keyword id="KW-0378">Hydrolase</keyword>
<keyword id="KW-1185">Reference proteome</keyword>
<keyword id="KW-0694">RNA-binding</keyword>
<keyword id="KW-0820">tRNA-binding</keyword>
<sequence length="201" mass="21691">MKLIVGLGNPGMQYQFTPHNLGFLAVDRIAEKYGIRVANRNCKALTGRGVIEGVDVVLAKPETYMNLSGASVQELVSELEIDGTKDMIVIYDDLDLPYGSIRVRERGSAGGHNGVQSIIGALDTQEFLRIRIGIAPEFKLSDGASYVLSQLKKSQLPVVDQALDDAAEAVKVILREGPGPAMNRFNRKPEPPESGGEVAAK</sequence>
<reference key="1">
    <citation type="journal article" date="2009" name="Appl. Environ. Microbiol.">
        <title>Three genomes from the phylum Acidobacteria provide insight into the lifestyles of these microorganisms in soils.</title>
        <authorList>
            <person name="Ward N.L."/>
            <person name="Challacombe J.F."/>
            <person name="Janssen P.H."/>
            <person name="Henrissat B."/>
            <person name="Coutinho P.M."/>
            <person name="Wu M."/>
            <person name="Xie G."/>
            <person name="Haft D.H."/>
            <person name="Sait M."/>
            <person name="Badger J."/>
            <person name="Barabote R.D."/>
            <person name="Bradley B."/>
            <person name="Brettin T.S."/>
            <person name="Brinkac L.M."/>
            <person name="Bruce D."/>
            <person name="Creasy T."/>
            <person name="Daugherty S.C."/>
            <person name="Davidsen T.M."/>
            <person name="DeBoy R.T."/>
            <person name="Detter J.C."/>
            <person name="Dodson R.J."/>
            <person name="Durkin A.S."/>
            <person name="Ganapathy A."/>
            <person name="Gwinn-Giglio M."/>
            <person name="Han C.S."/>
            <person name="Khouri H."/>
            <person name="Kiss H."/>
            <person name="Kothari S.P."/>
            <person name="Madupu R."/>
            <person name="Nelson K.E."/>
            <person name="Nelson W.C."/>
            <person name="Paulsen I."/>
            <person name="Penn K."/>
            <person name="Ren Q."/>
            <person name="Rosovitz M.J."/>
            <person name="Selengut J.D."/>
            <person name="Shrivastava S."/>
            <person name="Sullivan S.A."/>
            <person name="Tapia R."/>
            <person name="Thompson L.S."/>
            <person name="Watkins K.L."/>
            <person name="Yang Q."/>
            <person name="Yu C."/>
            <person name="Zafar N."/>
            <person name="Zhou L."/>
            <person name="Kuske C.R."/>
        </authorList>
    </citation>
    <scope>NUCLEOTIDE SEQUENCE [LARGE SCALE GENOMIC DNA]</scope>
    <source>
        <strain>Ellin345</strain>
    </source>
</reference>
<accession>Q1IHW2</accession>
<evidence type="ECO:0000255" key="1">
    <source>
        <dbReference type="HAMAP-Rule" id="MF_00083"/>
    </source>
</evidence>
<evidence type="ECO:0000256" key="2">
    <source>
        <dbReference type="SAM" id="MobiDB-lite"/>
    </source>
</evidence>
<evidence type="ECO:0000305" key="3"/>
<comment type="function">
    <text evidence="1">Hydrolyzes ribosome-free peptidyl-tRNAs (with 1 or more amino acids incorporated), which drop off the ribosome during protein synthesis, or as a result of ribosome stalling.</text>
</comment>
<comment type="function">
    <text evidence="1">Catalyzes the release of premature peptidyl moieties from peptidyl-tRNA molecules trapped in stalled 50S ribosomal subunits, and thus maintains levels of free tRNAs and 50S ribosomes.</text>
</comment>
<comment type="catalytic activity">
    <reaction evidence="1">
        <text>an N-acyl-L-alpha-aminoacyl-tRNA + H2O = an N-acyl-L-amino acid + a tRNA + H(+)</text>
        <dbReference type="Rhea" id="RHEA:54448"/>
        <dbReference type="Rhea" id="RHEA-COMP:10123"/>
        <dbReference type="Rhea" id="RHEA-COMP:13883"/>
        <dbReference type="ChEBI" id="CHEBI:15377"/>
        <dbReference type="ChEBI" id="CHEBI:15378"/>
        <dbReference type="ChEBI" id="CHEBI:59874"/>
        <dbReference type="ChEBI" id="CHEBI:78442"/>
        <dbReference type="ChEBI" id="CHEBI:138191"/>
        <dbReference type="EC" id="3.1.1.29"/>
    </reaction>
</comment>
<comment type="subunit">
    <text evidence="1">Monomer.</text>
</comment>
<comment type="subcellular location">
    <subcellularLocation>
        <location evidence="1">Cytoplasm</location>
    </subcellularLocation>
</comment>
<comment type="similarity">
    <text evidence="1">Belongs to the PTH family.</text>
</comment>
<comment type="sequence caution" evidence="3">
    <conflict type="erroneous initiation">
        <sequence resource="EMBL-CDS" id="ABF43538"/>
    </conflict>
    <text>Extended N-terminus.</text>
</comment>
<gene>
    <name evidence="1" type="primary">pth</name>
    <name type="ordered locus">Acid345_4538</name>
</gene>
<organism>
    <name type="scientific">Koribacter versatilis (strain Ellin345)</name>
    <dbReference type="NCBI Taxonomy" id="204669"/>
    <lineage>
        <taxon>Bacteria</taxon>
        <taxon>Pseudomonadati</taxon>
        <taxon>Acidobacteriota</taxon>
        <taxon>Terriglobia</taxon>
        <taxon>Terriglobales</taxon>
        <taxon>Candidatus Korobacteraceae</taxon>
        <taxon>Candidatus Korobacter</taxon>
    </lineage>
</organism>
<proteinExistence type="inferred from homology"/>